<name>FOLD_RICAE</name>
<comment type="function">
    <text evidence="1">Catalyzes the oxidation of 5,10-methylenetetrahydrofolate to 5,10-methenyltetrahydrofolate and then the hydrolysis of 5,10-methenyltetrahydrofolate to 10-formyltetrahydrofolate.</text>
</comment>
<comment type="catalytic activity">
    <reaction evidence="1">
        <text>(6R)-5,10-methylene-5,6,7,8-tetrahydrofolate + NADP(+) = (6R)-5,10-methenyltetrahydrofolate + NADPH</text>
        <dbReference type="Rhea" id="RHEA:22812"/>
        <dbReference type="ChEBI" id="CHEBI:15636"/>
        <dbReference type="ChEBI" id="CHEBI:57455"/>
        <dbReference type="ChEBI" id="CHEBI:57783"/>
        <dbReference type="ChEBI" id="CHEBI:58349"/>
        <dbReference type="EC" id="1.5.1.5"/>
    </reaction>
</comment>
<comment type="catalytic activity">
    <reaction evidence="1">
        <text>(6R)-5,10-methenyltetrahydrofolate + H2O = (6R)-10-formyltetrahydrofolate + H(+)</text>
        <dbReference type="Rhea" id="RHEA:23700"/>
        <dbReference type="ChEBI" id="CHEBI:15377"/>
        <dbReference type="ChEBI" id="CHEBI:15378"/>
        <dbReference type="ChEBI" id="CHEBI:57455"/>
        <dbReference type="ChEBI" id="CHEBI:195366"/>
        <dbReference type="EC" id="3.5.4.9"/>
    </reaction>
</comment>
<comment type="pathway">
    <text evidence="1">One-carbon metabolism; tetrahydrofolate interconversion.</text>
</comment>
<comment type="subunit">
    <text evidence="1">Homodimer.</text>
</comment>
<comment type="similarity">
    <text evidence="1">Belongs to the tetrahydrofolate dehydrogenase/cyclohydrolase family.</text>
</comment>
<evidence type="ECO:0000255" key="1">
    <source>
        <dbReference type="HAMAP-Rule" id="MF_01576"/>
    </source>
</evidence>
<reference key="1">
    <citation type="journal article" date="2009" name="BMC Genomics">
        <title>Analysis of the Rickettsia africae genome reveals that virulence acquisition in Rickettsia species may be explained by genome reduction.</title>
        <authorList>
            <person name="Fournier P.-E."/>
            <person name="El Karkouri K."/>
            <person name="Leroy Q."/>
            <person name="Robert C."/>
            <person name="Giumelli B."/>
            <person name="Renesto P."/>
            <person name="Socolovschi C."/>
            <person name="Parola P."/>
            <person name="Audic S."/>
            <person name="Raoult D."/>
        </authorList>
    </citation>
    <scope>NUCLEOTIDE SEQUENCE [LARGE SCALE GENOMIC DNA]</scope>
    <source>
        <strain>ESF-5</strain>
    </source>
</reference>
<gene>
    <name evidence="1" type="primary">folD</name>
    <name type="ordered locus">RAF_ORF0590</name>
</gene>
<organism>
    <name type="scientific">Rickettsia africae (strain ESF-5)</name>
    <dbReference type="NCBI Taxonomy" id="347255"/>
    <lineage>
        <taxon>Bacteria</taxon>
        <taxon>Pseudomonadati</taxon>
        <taxon>Pseudomonadota</taxon>
        <taxon>Alphaproteobacteria</taxon>
        <taxon>Rickettsiales</taxon>
        <taxon>Rickettsiaceae</taxon>
        <taxon>Rickettsieae</taxon>
        <taxon>Rickettsia</taxon>
        <taxon>spotted fever group</taxon>
    </lineage>
</organism>
<accession>C3PNI9</accession>
<proteinExistence type="inferred from homology"/>
<feature type="chain" id="PRO_1000215605" description="Bifunctional protein FolD">
    <location>
        <begin position="1"/>
        <end position="288"/>
    </location>
</feature>
<feature type="binding site" evidence="1">
    <location>
        <begin position="166"/>
        <end position="168"/>
    </location>
    <ligand>
        <name>NADP(+)</name>
        <dbReference type="ChEBI" id="CHEBI:58349"/>
    </ligand>
</feature>
<feature type="binding site" evidence="1">
    <location>
        <position position="191"/>
    </location>
    <ligand>
        <name>NADP(+)</name>
        <dbReference type="ChEBI" id="CHEBI:58349"/>
    </ligand>
</feature>
<feature type="binding site" evidence="1">
    <location>
        <position position="232"/>
    </location>
    <ligand>
        <name>NADP(+)</name>
        <dbReference type="ChEBI" id="CHEBI:58349"/>
    </ligand>
</feature>
<keyword id="KW-0028">Amino-acid biosynthesis</keyword>
<keyword id="KW-0368">Histidine biosynthesis</keyword>
<keyword id="KW-0378">Hydrolase</keyword>
<keyword id="KW-0486">Methionine biosynthesis</keyword>
<keyword id="KW-0511">Multifunctional enzyme</keyword>
<keyword id="KW-0521">NADP</keyword>
<keyword id="KW-0554">One-carbon metabolism</keyword>
<keyword id="KW-0560">Oxidoreductase</keyword>
<keyword id="KW-0658">Purine biosynthesis</keyword>
<protein>
    <recommendedName>
        <fullName evidence="1">Bifunctional protein FolD</fullName>
    </recommendedName>
    <domain>
        <recommendedName>
            <fullName evidence="1">Methylenetetrahydrofolate dehydrogenase</fullName>
            <ecNumber evidence="1">1.5.1.5</ecNumber>
        </recommendedName>
    </domain>
    <domain>
        <recommendedName>
            <fullName evidence="1">Methenyltetrahydrofolate cyclohydrolase</fullName>
            <ecNumber evidence="1">3.5.4.9</ecNumber>
        </recommendedName>
    </domain>
</protein>
<dbReference type="EC" id="1.5.1.5" evidence="1"/>
<dbReference type="EC" id="3.5.4.9" evidence="1"/>
<dbReference type="EMBL" id="CP001612">
    <property type="protein sequence ID" value="ACP53499.1"/>
    <property type="molecule type" value="Genomic_DNA"/>
</dbReference>
<dbReference type="RefSeq" id="WP_004995703.1">
    <property type="nucleotide sequence ID" value="NC_012633.1"/>
</dbReference>
<dbReference type="SMR" id="C3PNI9"/>
<dbReference type="GeneID" id="95362246"/>
<dbReference type="KEGG" id="raf:RAF_ORF0590"/>
<dbReference type="HOGENOM" id="CLU_034045_2_1_5"/>
<dbReference type="UniPathway" id="UPA00193"/>
<dbReference type="Proteomes" id="UP000002305">
    <property type="component" value="Chromosome"/>
</dbReference>
<dbReference type="GO" id="GO:0005829">
    <property type="term" value="C:cytosol"/>
    <property type="evidence" value="ECO:0007669"/>
    <property type="project" value="TreeGrafter"/>
</dbReference>
<dbReference type="GO" id="GO:0004477">
    <property type="term" value="F:methenyltetrahydrofolate cyclohydrolase activity"/>
    <property type="evidence" value="ECO:0007669"/>
    <property type="project" value="UniProtKB-UniRule"/>
</dbReference>
<dbReference type="GO" id="GO:0004488">
    <property type="term" value="F:methylenetetrahydrofolate dehydrogenase (NADP+) activity"/>
    <property type="evidence" value="ECO:0007669"/>
    <property type="project" value="UniProtKB-UniRule"/>
</dbReference>
<dbReference type="GO" id="GO:0000105">
    <property type="term" value="P:L-histidine biosynthetic process"/>
    <property type="evidence" value="ECO:0007669"/>
    <property type="project" value="UniProtKB-KW"/>
</dbReference>
<dbReference type="GO" id="GO:0009086">
    <property type="term" value="P:methionine biosynthetic process"/>
    <property type="evidence" value="ECO:0007669"/>
    <property type="project" value="UniProtKB-KW"/>
</dbReference>
<dbReference type="GO" id="GO:0006164">
    <property type="term" value="P:purine nucleotide biosynthetic process"/>
    <property type="evidence" value="ECO:0007669"/>
    <property type="project" value="UniProtKB-KW"/>
</dbReference>
<dbReference type="GO" id="GO:0035999">
    <property type="term" value="P:tetrahydrofolate interconversion"/>
    <property type="evidence" value="ECO:0007669"/>
    <property type="project" value="UniProtKB-UniRule"/>
</dbReference>
<dbReference type="CDD" id="cd01080">
    <property type="entry name" value="NAD_bind_m-THF_DH_Cyclohyd"/>
    <property type="match status" value="1"/>
</dbReference>
<dbReference type="FunFam" id="3.40.50.720:FF:000094">
    <property type="entry name" value="Bifunctional protein FolD"/>
    <property type="match status" value="1"/>
</dbReference>
<dbReference type="FunFam" id="3.40.50.10860:FF:000005">
    <property type="entry name" value="C-1-tetrahydrofolate synthase, cytoplasmic, putative"/>
    <property type="match status" value="1"/>
</dbReference>
<dbReference type="Gene3D" id="3.40.50.10860">
    <property type="entry name" value="Leucine Dehydrogenase, chain A, domain 1"/>
    <property type="match status" value="1"/>
</dbReference>
<dbReference type="Gene3D" id="3.40.50.720">
    <property type="entry name" value="NAD(P)-binding Rossmann-like Domain"/>
    <property type="match status" value="1"/>
</dbReference>
<dbReference type="HAMAP" id="MF_01576">
    <property type="entry name" value="THF_DHG_CYH"/>
    <property type="match status" value="1"/>
</dbReference>
<dbReference type="InterPro" id="IPR046346">
    <property type="entry name" value="Aminoacid_DH-like_N_sf"/>
</dbReference>
<dbReference type="InterPro" id="IPR036291">
    <property type="entry name" value="NAD(P)-bd_dom_sf"/>
</dbReference>
<dbReference type="InterPro" id="IPR000672">
    <property type="entry name" value="THF_DH/CycHdrlase"/>
</dbReference>
<dbReference type="InterPro" id="IPR020630">
    <property type="entry name" value="THF_DH/CycHdrlase_cat_dom"/>
</dbReference>
<dbReference type="InterPro" id="IPR020867">
    <property type="entry name" value="THF_DH/CycHdrlase_CS"/>
</dbReference>
<dbReference type="InterPro" id="IPR020631">
    <property type="entry name" value="THF_DH/CycHdrlase_NAD-bd_dom"/>
</dbReference>
<dbReference type="NCBIfam" id="NF010768">
    <property type="entry name" value="PRK14171.1"/>
    <property type="match status" value="1"/>
</dbReference>
<dbReference type="PANTHER" id="PTHR48099:SF5">
    <property type="entry name" value="C-1-TETRAHYDROFOLATE SYNTHASE, CYTOPLASMIC"/>
    <property type="match status" value="1"/>
</dbReference>
<dbReference type="PANTHER" id="PTHR48099">
    <property type="entry name" value="C-1-TETRAHYDROFOLATE SYNTHASE, CYTOPLASMIC-RELATED"/>
    <property type="match status" value="1"/>
</dbReference>
<dbReference type="Pfam" id="PF00763">
    <property type="entry name" value="THF_DHG_CYH"/>
    <property type="match status" value="1"/>
</dbReference>
<dbReference type="Pfam" id="PF02882">
    <property type="entry name" value="THF_DHG_CYH_C"/>
    <property type="match status" value="1"/>
</dbReference>
<dbReference type="PRINTS" id="PR00085">
    <property type="entry name" value="THFDHDRGNASE"/>
</dbReference>
<dbReference type="SUPFAM" id="SSF53223">
    <property type="entry name" value="Aminoacid dehydrogenase-like, N-terminal domain"/>
    <property type="match status" value="1"/>
</dbReference>
<dbReference type="SUPFAM" id="SSF51735">
    <property type="entry name" value="NAD(P)-binding Rossmann-fold domains"/>
    <property type="match status" value="1"/>
</dbReference>
<dbReference type="PROSITE" id="PS00766">
    <property type="entry name" value="THF_DHG_CYH_1"/>
    <property type="match status" value="1"/>
</dbReference>
<dbReference type="PROSITE" id="PS00767">
    <property type="entry name" value="THF_DHG_CYH_2"/>
    <property type="match status" value="1"/>
</dbReference>
<sequence length="288" mass="30995">MNNIIDGKALANEILADLKLEIQELTSQTNASPKLAIVLVGDNPASIIYVRHKIKNAHKIGIYTLLINLSATIHTNDLISKINELNLDNEISGIIVQLPLPSSIDKNKILSAVSPSKDIDGFHPLNVGYLHSGISQGFIPCTALGCLAAIKKYEPNLTGKNVVIIGRSNIVGKPLSALLLKENCSVTICHSKTHNLRSITSKADIVVAAIGSPLKLTAEYFNPKSIVIDVGINRISSNKIIGDVDFENVQSKVQYITPVPGGIGPMTIAFLLKNTVKAFKDSLYTLDT</sequence>